<evidence type="ECO:0000255" key="1">
    <source>
        <dbReference type="HAMAP-Rule" id="MF_00293"/>
    </source>
</evidence>
<name>PSBN_TUPAK</name>
<accession>Q3ZJ27</accession>
<comment type="function">
    <text evidence="1">May play a role in photosystem I and II biogenesis.</text>
</comment>
<comment type="subcellular location">
    <subcellularLocation>
        <location evidence="1">Plastid</location>
        <location evidence="1">Chloroplast thylakoid membrane</location>
        <topology evidence="1">Single-pass membrane protein</topology>
    </subcellularLocation>
</comment>
<comment type="similarity">
    <text evidence="1">Belongs to the PsbN family.</text>
</comment>
<comment type="caution">
    <text evidence="1">Originally thought to be a component of PSII; based on experiments in Synechocystis, N.tabacum and barley, and its absence from PSII in T.elongatus and T.vulcanus, this is probably not true.</text>
</comment>
<gene>
    <name evidence="1" type="primary">psbN</name>
</gene>
<geneLocation type="chloroplast"/>
<organism>
    <name type="scientific">Tupiella akineta</name>
    <name type="common">Green alga</name>
    <name type="synonym">Pseudendoclonium akinetum</name>
    <dbReference type="NCBI Taxonomy" id="160070"/>
    <lineage>
        <taxon>Eukaryota</taxon>
        <taxon>Viridiplantae</taxon>
        <taxon>Chlorophyta</taxon>
        <taxon>Ulvophyceae</taxon>
        <taxon>OUU clade</taxon>
        <taxon>Ulotrichales</taxon>
        <taxon>Tupiellaceae</taxon>
        <taxon>Tupiella</taxon>
    </lineage>
</organism>
<dbReference type="EMBL" id="AY835431">
    <property type="protein sequence ID" value="AAV80662.1"/>
    <property type="molecule type" value="Genomic_DNA"/>
</dbReference>
<dbReference type="RefSeq" id="YP_636240.1">
    <property type="nucleotide sequence ID" value="NC_008114.1"/>
</dbReference>
<dbReference type="SMR" id="Q3ZJ27"/>
<dbReference type="GeneID" id="4108842"/>
<dbReference type="GO" id="GO:0009535">
    <property type="term" value="C:chloroplast thylakoid membrane"/>
    <property type="evidence" value="ECO:0007669"/>
    <property type="project" value="UniProtKB-SubCell"/>
</dbReference>
<dbReference type="GO" id="GO:0015979">
    <property type="term" value="P:photosynthesis"/>
    <property type="evidence" value="ECO:0007669"/>
    <property type="project" value="InterPro"/>
</dbReference>
<dbReference type="HAMAP" id="MF_00293">
    <property type="entry name" value="PSII_PsbN"/>
    <property type="match status" value="1"/>
</dbReference>
<dbReference type="InterPro" id="IPR003398">
    <property type="entry name" value="PSII_PsbN"/>
</dbReference>
<dbReference type="PANTHER" id="PTHR35326">
    <property type="entry name" value="PROTEIN PSBN"/>
    <property type="match status" value="1"/>
</dbReference>
<dbReference type="PANTHER" id="PTHR35326:SF3">
    <property type="entry name" value="PROTEIN PSBN"/>
    <property type="match status" value="1"/>
</dbReference>
<dbReference type="Pfam" id="PF02468">
    <property type="entry name" value="PsbN"/>
    <property type="match status" value="1"/>
</dbReference>
<feature type="chain" id="PRO_0000232777" description="Protein PsbN">
    <location>
        <begin position="1"/>
        <end position="44"/>
    </location>
</feature>
<feature type="transmembrane region" description="Helical" evidence="1">
    <location>
        <begin position="6"/>
        <end position="26"/>
    </location>
</feature>
<keyword id="KW-0150">Chloroplast</keyword>
<keyword id="KW-0472">Membrane</keyword>
<keyword id="KW-0934">Plastid</keyword>
<keyword id="KW-0793">Thylakoid</keyword>
<keyword id="KW-0812">Transmembrane</keyword>
<keyword id="KW-1133">Transmembrane helix</keyword>
<sequence length="44" mass="5116">MESPAFFFSLFVWCLLLSITAYSLYVGFGPPSKQLRDPFEEHED</sequence>
<reference key="1">
    <citation type="journal article" date="2005" name="Mol. Biol. Evol.">
        <title>The chloroplast genome sequence of the green alga Pseudendoclonium akinetum (Ulvophyceae) reveals unusual structural features and new insights into the branching order of chlorophyte lineages.</title>
        <authorList>
            <person name="Pombert J.-F."/>
            <person name="Otis C."/>
            <person name="Lemieux C."/>
            <person name="Turmel M."/>
        </authorList>
    </citation>
    <scope>NUCLEOTIDE SEQUENCE [LARGE SCALE GENOMIC DNA]</scope>
    <source>
        <strain>UTEX 1912</strain>
    </source>
</reference>
<protein>
    <recommendedName>
        <fullName evidence="1">Protein PsbN</fullName>
    </recommendedName>
</protein>
<proteinExistence type="inferred from homology"/>